<dbReference type="EMBL" id="CP000920">
    <property type="protein sequence ID" value="ACO21763.1"/>
    <property type="molecule type" value="Genomic_DNA"/>
</dbReference>
<dbReference type="RefSeq" id="WP_000529936.1">
    <property type="nucleotide sequence ID" value="NC_012467.1"/>
</dbReference>
<dbReference type="SMR" id="C1CIA3"/>
<dbReference type="GeneID" id="49600535"/>
<dbReference type="KEGG" id="spp:SPP_0266"/>
<dbReference type="HOGENOM" id="CLU_058591_0_2_9"/>
<dbReference type="GO" id="GO:0022627">
    <property type="term" value="C:cytosolic small ribosomal subunit"/>
    <property type="evidence" value="ECO:0007669"/>
    <property type="project" value="TreeGrafter"/>
</dbReference>
<dbReference type="GO" id="GO:0003729">
    <property type="term" value="F:mRNA binding"/>
    <property type="evidence" value="ECO:0007669"/>
    <property type="project" value="UniProtKB-UniRule"/>
</dbReference>
<dbReference type="GO" id="GO:0019843">
    <property type="term" value="F:rRNA binding"/>
    <property type="evidence" value="ECO:0007669"/>
    <property type="project" value="UniProtKB-UniRule"/>
</dbReference>
<dbReference type="GO" id="GO:0003735">
    <property type="term" value="F:structural constituent of ribosome"/>
    <property type="evidence" value="ECO:0007669"/>
    <property type="project" value="InterPro"/>
</dbReference>
<dbReference type="GO" id="GO:0006412">
    <property type="term" value="P:translation"/>
    <property type="evidence" value="ECO:0007669"/>
    <property type="project" value="UniProtKB-UniRule"/>
</dbReference>
<dbReference type="CDD" id="cd02412">
    <property type="entry name" value="KH-II_30S_S3"/>
    <property type="match status" value="1"/>
</dbReference>
<dbReference type="FunFam" id="3.30.1140.32:FF:000001">
    <property type="entry name" value="30S ribosomal protein S3"/>
    <property type="match status" value="1"/>
</dbReference>
<dbReference type="FunFam" id="3.30.300.20:FF:000001">
    <property type="entry name" value="30S ribosomal protein S3"/>
    <property type="match status" value="1"/>
</dbReference>
<dbReference type="Gene3D" id="3.30.300.20">
    <property type="match status" value="1"/>
</dbReference>
<dbReference type="Gene3D" id="3.30.1140.32">
    <property type="entry name" value="Ribosomal protein S3, C-terminal domain"/>
    <property type="match status" value="1"/>
</dbReference>
<dbReference type="HAMAP" id="MF_01309_B">
    <property type="entry name" value="Ribosomal_uS3_B"/>
    <property type="match status" value="1"/>
</dbReference>
<dbReference type="InterPro" id="IPR004087">
    <property type="entry name" value="KH_dom"/>
</dbReference>
<dbReference type="InterPro" id="IPR015946">
    <property type="entry name" value="KH_dom-like_a/b"/>
</dbReference>
<dbReference type="InterPro" id="IPR004044">
    <property type="entry name" value="KH_dom_type_2"/>
</dbReference>
<dbReference type="InterPro" id="IPR009019">
    <property type="entry name" value="KH_sf_prok-type"/>
</dbReference>
<dbReference type="InterPro" id="IPR036419">
    <property type="entry name" value="Ribosomal_S3_C_sf"/>
</dbReference>
<dbReference type="InterPro" id="IPR005704">
    <property type="entry name" value="Ribosomal_uS3_bac-typ"/>
</dbReference>
<dbReference type="InterPro" id="IPR001351">
    <property type="entry name" value="Ribosomal_uS3_C"/>
</dbReference>
<dbReference type="InterPro" id="IPR018280">
    <property type="entry name" value="Ribosomal_uS3_CS"/>
</dbReference>
<dbReference type="NCBIfam" id="TIGR01009">
    <property type="entry name" value="rpsC_bact"/>
    <property type="match status" value="1"/>
</dbReference>
<dbReference type="PANTHER" id="PTHR11760">
    <property type="entry name" value="30S/40S RIBOSOMAL PROTEIN S3"/>
    <property type="match status" value="1"/>
</dbReference>
<dbReference type="PANTHER" id="PTHR11760:SF19">
    <property type="entry name" value="SMALL RIBOSOMAL SUBUNIT PROTEIN US3C"/>
    <property type="match status" value="1"/>
</dbReference>
<dbReference type="Pfam" id="PF07650">
    <property type="entry name" value="KH_2"/>
    <property type="match status" value="1"/>
</dbReference>
<dbReference type="Pfam" id="PF00189">
    <property type="entry name" value="Ribosomal_S3_C"/>
    <property type="match status" value="1"/>
</dbReference>
<dbReference type="SMART" id="SM00322">
    <property type="entry name" value="KH"/>
    <property type="match status" value="1"/>
</dbReference>
<dbReference type="SUPFAM" id="SSF54814">
    <property type="entry name" value="Prokaryotic type KH domain (KH-domain type II)"/>
    <property type="match status" value="1"/>
</dbReference>
<dbReference type="SUPFAM" id="SSF54821">
    <property type="entry name" value="Ribosomal protein S3 C-terminal domain"/>
    <property type="match status" value="1"/>
</dbReference>
<dbReference type="PROSITE" id="PS50823">
    <property type="entry name" value="KH_TYPE_2"/>
    <property type="match status" value="1"/>
</dbReference>
<dbReference type="PROSITE" id="PS00548">
    <property type="entry name" value="RIBOSOMAL_S3"/>
    <property type="match status" value="1"/>
</dbReference>
<comment type="function">
    <text evidence="1">Binds the lower part of the 30S subunit head. Binds mRNA in the 70S ribosome, positioning it for translation.</text>
</comment>
<comment type="subunit">
    <text evidence="1">Part of the 30S ribosomal subunit. Forms a tight complex with proteins S10 and S14.</text>
</comment>
<comment type="similarity">
    <text evidence="1">Belongs to the universal ribosomal protein uS3 family.</text>
</comment>
<protein>
    <recommendedName>
        <fullName evidence="1">Small ribosomal subunit protein uS3</fullName>
    </recommendedName>
    <alternativeName>
        <fullName evidence="2">30S ribosomal protein S3</fullName>
    </alternativeName>
</protein>
<name>RS3_STRZP</name>
<sequence length="217" mass="24046">MGQKVHPIGMRVGIIRDWDAKWYAEKEYADYLHEDLAIRKFVQKELADAAVSTIEIERAVNKVNVSLHTAKPGMVIGKGGANVDALRAKLNKLTGKQVHINIIEIKQPDLDAHLVGEGIARQLEQRVAFRRAQKQAIQRAMRAGAKGIKTQVSGRLNGADIARAEGYSEGTVPLHTLRADIDYAWEEADTTYGKLGVKVWIYRGEVLPARKNTKGGK</sequence>
<evidence type="ECO:0000255" key="1">
    <source>
        <dbReference type="HAMAP-Rule" id="MF_01309"/>
    </source>
</evidence>
<evidence type="ECO:0000305" key="2"/>
<reference key="1">
    <citation type="journal article" date="2010" name="Genome Biol.">
        <title>Structure and dynamics of the pan-genome of Streptococcus pneumoniae and closely related species.</title>
        <authorList>
            <person name="Donati C."/>
            <person name="Hiller N.L."/>
            <person name="Tettelin H."/>
            <person name="Muzzi A."/>
            <person name="Croucher N.J."/>
            <person name="Angiuoli S.V."/>
            <person name="Oggioni M."/>
            <person name="Dunning Hotopp J.C."/>
            <person name="Hu F.Z."/>
            <person name="Riley D.R."/>
            <person name="Covacci A."/>
            <person name="Mitchell T.J."/>
            <person name="Bentley S.D."/>
            <person name="Kilian M."/>
            <person name="Ehrlich G.D."/>
            <person name="Rappuoli R."/>
            <person name="Moxon E.R."/>
            <person name="Masignani V."/>
        </authorList>
    </citation>
    <scope>NUCLEOTIDE SEQUENCE [LARGE SCALE GENOMIC DNA]</scope>
    <source>
        <strain>P1031</strain>
    </source>
</reference>
<gene>
    <name evidence="1" type="primary">rpsC</name>
    <name type="ordered locus">SPP_0266</name>
</gene>
<organism>
    <name type="scientific">Streptococcus pneumoniae (strain P1031)</name>
    <dbReference type="NCBI Taxonomy" id="488223"/>
    <lineage>
        <taxon>Bacteria</taxon>
        <taxon>Bacillati</taxon>
        <taxon>Bacillota</taxon>
        <taxon>Bacilli</taxon>
        <taxon>Lactobacillales</taxon>
        <taxon>Streptococcaceae</taxon>
        <taxon>Streptococcus</taxon>
    </lineage>
</organism>
<feature type="chain" id="PRO_1000165516" description="Small ribosomal subunit protein uS3">
    <location>
        <begin position="1"/>
        <end position="217"/>
    </location>
</feature>
<feature type="domain" description="KH type-2" evidence="1">
    <location>
        <begin position="38"/>
        <end position="106"/>
    </location>
</feature>
<accession>C1CIA3</accession>
<keyword id="KW-0687">Ribonucleoprotein</keyword>
<keyword id="KW-0689">Ribosomal protein</keyword>
<keyword id="KW-0694">RNA-binding</keyword>
<keyword id="KW-0699">rRNA-binding</keyword>
<proteinExistence type="inferred from homology"/>